<name>POLG_DEN2U</name>
<protein>
    <recommendedName>
        <fullName>Genome polyprotein</fullName>
    </recommendedName>
    <component>
        <recommendedName>
            <fullName>Protein prM</fullName>
        </recommendedName>
    </component>
    <component>
        <recommendedName>
            <fullName>Peptide pr</fullName>
        </recommendedName>
    </component>
    <component>
        <recommendedName>
            <fullName>Small envelope protein M</fullName>
        </recommendedName>
        <alternativeName>
            <fullName>Matrix protein</fullName>
        </alternativeName>
    </component>
    <component>
        <recommendedName>
            <fullName>Envelope protein E</fullName>
        </recommendedName>
    </component>
    <component>
        <recommendedName>
            <fullName>Non-structural protein 1</fullName>
            <shortName>NS1</shortName>
        </recommendedName>
    </component>
</protein>
<organism>
    <name type="scientific">Dengue virus type 2 (strain Thailand/PUO-218/1980)</name>
    <name type="common">DENV-2</name>
    <dbReference type="NCBI Taxonomy" id="11068"/>
    <lineage>
        <taxon>Viruses</taxon>
        <taxon>Riboviria</taxon>
        <taxon>Orthornavirae</taxon>
        <taxon>Kitrinoviricota</taxon>
        <taxon>Flasuviricetes</taxon>
        <taxon>Amarillovirales</taxon>
        <taxon>Flaviviridae</taxon>
        <taxon>Orthoflavivirus</taxon>
        <taxon>Orthoflavivirus denguei</taxon>
        <taxon>Dengue virus</taxon>
    </lineage>
</organism>
<keyword id="KW-0002">3D-structure</keyword>
<keyword id="KW-1165">Clathrin-mediated endocytosis of virus by host</keyword>
<keyword id="KW-0165">Cleavage on pair of basic residues</keyword>
<keyword id="KW-1015">Disulfide bond</keyword>
<keyword id="KW-1170">Fusion of virus membrane with host endosomal membrane</keyword>
<keyword id="KW-1168">Fusion of virus membrane with host membrane</keyword>
<keyword id="KW-0325">Glycoprotein</keyword>
<keyword id="KW-1038">Host endoplasmic reticulum</keyword>
<keyword id="KW-1043">Host membrane</keyword>
<keyword id="KW-0945">Host-virus interaction</keyword>
<keyword id="KW-1090">Inhibition of host innate immune response by virus</keyword>
<keyword id="KW-0472">Membrane</keyword>
<keyword id="KW-0964">Secreted</keyword>
<keyword id="KW-0941">Suppressor of RNA silencing</keyword>
<keyword id="KW-0812">Transmembrane</keyword>
<keyword id="KW-1133">Transmembrane helix</keyword>
<keyword id="KW-1161">Viral attachment to host cell</keyword>
<keyword id="KW-0261">Viral envelope protein</keyword>
<keyword id="KW-0899">Viral immunoevasion</keyword>
<keyword id="KW-0543">Viral nucleoprotein</keyword>
<keyword id="KW-1162">Viral penetration into host cytoplasm</keyword>
<keyword id="KW-0946">Virion</keyword>
<keyword id="KW-1164">Virus endocytosis by host</keyword>
<keyword id="KW-1160">Virus entry into host cell</keyword>
<keyword id="KW-0862">Zinc</keyword>
<sequence length="679" mass="74932">SAGMIIMLIPTVMAFHLTTRNGEPHMIVSRQEKGKSLLFKTEDGVNMCTLMAMDLGELCEDTITYKCPLLRQNEPEDIDCWCNSTSTWVTYGTCTTTGEHRREKRSVALVPHVGMGLETRTETWMSSEGAWKHAQRIEIWILRHPGFTIMAAILAYTIGTTHFQRALIFILLTAVAPSMTMRCIGISNRDFVEGVSGGSWVDIVLEHGSCVTTMAKNKPTLDFELIKTEAKQPATLRKYCIEAKLTNTTTESRCPTQGEPSLNEEQDKRFVCKHSMVDRGWGNGCGLFGKGGIVTCAMFTCKKNMEGKVVQPENLEYTIVVTPHSGEEHAVGNDTGKHGKEIKVTPQSSITEAELTGYGTVTMECSPRTGLDFNEMVLLQMENKAWLVHRQWFLDLPLPWLPGADTQGSNWIQKETLVTFKNPHAKKQDVVVLGSQEGAMHTALTGATEIQMSSGNLLFTGHLKCRLRMDKLQLKGMSYSMCTGKFKVVKEIAETQHGTIVIRVQYEGDGSPCKIPFEIMDLEKRHVLGRLITVNPIVTEKDSPVNIEAEPPFGDSYIIIGVEPGQLKLNWFKKGSSIGQMFETTMRGAKRMAILGDTAWDFGSLGGVFTSIGKALHQVFGAIYGAAFSGVSWTMKILIGVIITWIGMNSRSTSLSVSLVLVGIVTLYLGVMVQADSGC</sequence>
<dbReference type="EMBL" id="D00345">
    <property type="protein sequence ID" value="BAA00254.1"/>
    <property type="molecule type" value="Genomic_RNA"/>
</dbReference>
<dbReference type="PIR" id="PS0043">
    <property type="entry name" value="PS0043"/>
</dbReference>
<dbReference type="PDB" id="2JSF">
    <property type="method" value="NMR"/>
    <property type="chains" value="A=469-577"/>
</dbReference>
<dbReference type="PDB" id="2R6P">
    <property type="method" value="EM"/>
    <property type="resolution" value="24.00 A"/>
    <property type="chains" value="A/B/C=181-570"/>
</dbReference>
<dbReference type="PDB" id="3C6R">
    <property type="method" value="EM"/>
    <property type="resolution" value="25.00 A"/>
    <property type="chains" value="A/B/C=181-575, D/E/F=15-95"/>
</dbReference>
<dbReference type="PDB" id="3IXY">
    <property type="method" value="EM"/>
    <property type="chains" value="D/E/F=15-95"/>
</dbReference>
<dbReference type="PDB" id="3IYA">
    <property type="method" value="EM"/>
    <property type="chains" value="A/B/C=181-575, D/E/F=15-95"/>
</dbReference>
<dbReference type="PDB" id="7KV8">
    <property type="method" value="EM"/>
    <property type="resolution" value="2.50 A"/>
    <property type="chains" value="A/B/C=181-675"/>
</dbReference>
<dbReference type="PDBsum" id="2JSF"/>
<dbReference type="PDBsum" id="2R6P"/>
<dbReference type="PDBsum" id="3C6R"/>
<dbReference type="PDBsum" id="3IXY"/>
<dbReference type="PDBsum" id="3IYA"/>
<dbReference type="PDBsum" id="7KV8"/>
<dbReference type="SMR" id="P18356"/>
<dbReference type="ABCD" id="P18356">
    <property type="antibodies" value="3 sequenced antibodies"/>
</dbReference>
<dbReference type="EvolutionaryTrace" id="P18356"/>
<dbReference type="GO" id="GO:0005576">
    <property type="term" value="C:extracellular region"/>
    <property type="evidence" value="ECO:0007669"/>
    <property type="project" value="UniProtKB-SubCell"/>
</dbReference>
<dbReference type="GO" id="GO:0044167">
    <property type="term" value="C:host cell endoplasmic reticulum membrane"/>
    <property type="evidence" value="ECO:0007669"/>
    <property type="project" value="UniProtKB-SubCell"/>
</dbReference>
<dbReference type="GO" id="GO:0016020">
    <property type="term" value="C:membrane"/>
    <property type="evidence" value="ECO:0007669"/>
    <property type="project" value="UniProtKB-KW"/>
</dbReference>
<dbReference type="GO" id="GO:0019031">
    <property type="term" value="C:viral envelope"/>
    <property type="evidence" value="ECO:0007669"/>
    <property type="project" value="UniProtKB-KW"/>
</dbReference>
<dbReference type="GO" id="GO:0019013">
    <property type="term" value="C:viral nucleocapsid"/>
    <property type="evidence" value="ECO:0007669"/>
    <property type="project" value="UniProtKB-KW"/>
</dbReference>
<dbReference type="GO" id="GO:0055036">
    <property type="term" value="C:virion membrane"/>
    <property type="evidence" value="ECO:0007669"/>
    <property type="project" value="UniProtKB-SubCell"/>
</dbReference>
<dbReference type="GO" id="GO:0046983">
    <property type="term" value="F:protein dimerization activity"/>
    <property type="evidence" value="ECO:0007669"/>
    <property type="project" value="InterPro"/>
</dbReference>
<dbReference type="GO" id="GO:0075512">
    <property type="term" value="P:clathrin-dependent endocytosis of virus by host cell"/>
    <property type="evidence" value="ECO:0007669"/>
    <property type="project" value="UniProtKB-KW"/>
</dbReference>
<dbReference type="GO" id="GO:0039654">
    <property type="term" value="P:fusion of virus membrane with host endosome membrane"/>
    <property type="evidence" value="ECO:0007669"/>
    <property type="project" value="UniProtKB-KW"/>
</dbReference>
<dbReference type="GO" id="GO:0052170">
    <property type="term" value="P:symbiont-mediated suppression of host innate immune response"/>
    <property type="evidence" value="ECO:0007669"/>
    <property type="project" value="UniProtKB-KW"/>
</dbReference>
<dbReference type="GO" id="GO:0019062">
    <property type="term" value="P:virion attachment to host cell"/>
    <property type="evidence" value="ECO:0007669"/>
    <property type="project" value="UniProtKB-KW"/>
</dbReference>
<dbReference type="CDD" id="cd12149">
    <property type="entry name" value="Flavi_E_C"/>
    <property type="match status" value="1"/>
</dbReference>
<dbReference type="CDD" id="cd17038">
    <property type="entry name" value="Flavi_M"/>
    <property type="match status" value="1"/>
</dbReference>
<dbReference type="FunFam" id="1.20.1280.260:FF:000001">
    <property type="entry name" value="Envelope glycoprotein"/>
    <property type="match status" value="1"/>
</dbReference>
<dbReference type="FunFam" id="2.60.40.350:FF:000001">
    <property type="entry name" value="Envelope glycoprotein"/>
    <property type="match status" value="1"/>
</dbReference>
<dbReference type="FunFam" id="2.60.260.50:FF:000001">
    <property type="entry name" value="Genome polyprotein"/>
    <property type="match status" value="1"/>
</dbReference>
<dbReference type="Gene3D" id="1.20.1280.260">
    <property type="match status" value="1"/>
</dbReference>
<dbReference type="Gene3D" id="2.60.40.350">
    <property type="match status" value="1"/>
</dbReference>
<dbReference type="Gene3D" id="1.10.8.970">
    <property type="entry name" value="Flavivirus envelope glycoprotein M-like"/>
    <property type="match status" value="1"/>
</dbReference>
<dbReference type="Gene3D" id="2.60.260.50">
    <property type="entry name" value="Flavivirus polyprotein propeptide domain"/>
    <property type="match status" value="1"/>
</dbReference>
<dbReference type="Gene3D" id="2.60.98.10">
    <property type="entry name" value="Tick-borne Encephalitis virus Glycoprotein, domain 1"/>
    <property type="match status" value="1"/>
</dbReference>
<dbReference type="Gene3D" id="3.30.67.10">
    <property type="entry name" value="Viral Envelope Glycoprotein, domain 2"/>
    <property type="match status" value="1"/>
</dbReference>
<dbReference type="Gene3D" id="3.30.387.10">
    <property type="entry name" value="Viral Envelope Glycoprotein, domain 3"/>
    <property type="match status" value="1"/>
</dbReference>
<dbReference type="InterPro" id="IPR000069">
    <property type="entry name" value="Env_glycoprot_M_flavivir"/>
</dbReference>
<dbReference type="InterPro" id="IPR038302">
    <property type="entry name" value="Env_glycoprot_M_sf_flavivir"/>
</dbReference>
<dbReference type="InterPro" id="IPR013755">
    <property type="entry name" value="Flav_gly_cen_dom_subdom1"/>
</dbReference>
<dbReference type="InterPro" id="IPR027287">
    <property type="entry name" value="Flavi_E_Ig-like"/>
</dbReference>
<dbReference type="InterPro" id="IPR026470">
    <property type="entry name" value="Flavi_E_Stem/Anchor_dom"/>
</dbReference>
<dbReference type="InterPro" id="IPR038345">
    <property type="entry name" value="Flavi_E_Stem/Anchor_dom_sf"/>
</dbReference>
<dbReference type="InterPro" id="IPR011998">
    <property type="entry name" value="Flavi_Glycoprot_E_cen/dimer"/>
</dbReference>
<dbReference type="InterPro" id="IPR002535">
    <property type="entry name" value="Flavi_propep"/>
</dbReference>
<dbReference type="InterPro" id="IPR038688">
    <property type="entry name" value="Flavi_propep_sf"/>
</dbReference>
<dbReference type="InterPro" id="IPR000336">
    <property type="entry name" value="Flavivir/Alphavir_Ig-like_sf"/>
</dbReference>
<dbReference type="InterPro" id="IPR036253">
    <property type="entry name" value="Glycoprot_cen/dimer_sf"/>
</dbReference>
<dbReference type="InterPro" id="IPR038055">
    <property type="entry name" value="Glycoprot_E_dimer_dom"/>
</dbReference>
<dbReference type="InterPro" id="IPR013756">
    <property type="entry name" value="GlyE_cen_dom_subdom2"/>
</dbReference>
<dbReference type="InterPro" id="IPR014756">
    <property type="entry name" value="Ig_E-set"/>
</dbReference>
<dbReference type="NCBIfam" id="TIGR04240">
    <property type="entry name" value="flavi_E_stem"/>
    <property type="match status" value="1"/>
</dbReference>
<dbReference type="Pfam" id="PF21659">
    <property type="entry name" value="Flavi_E_stem"/>
    <property type="match status" value="1"/>
</dbReference>
<dbReference type="Pfam" id="PF02832">
    <property type="entry name" value="Flavi_glycop_C"/>
    <property type="match status" value="1"/>
</dbReference>
<dbReference type="Pfam" id="PF00869">
    <property type="entry name" value="Flavi_glycoprot"/>
    <property type="match status" value="1"/>
</dbReference>
<dbReference type="Pfam" id="PF01004">
    <property type="entry name" value="Flavi_M"/>
    <property type="match status" value="1"/>
</dbReference>
<dbReference type="Pfam" id="PF01570">
    <property type="entry name" value="Flavi_propep"/>
    <property type="match status" value="1"/>
</dbReference>
<dbReference type="SUPFAM" id="SSF81296">
    <property type="entry name" value="E set domains"/>
    <property type="match status" value="1"/>
</dbReference>
<dbReference type="SUPFAM" id="SSF56983">
    <property type="entry name" value="Viral glycoprotein, central and dimerisation domains"/>
    <property type="match status" value="1"/>
</dbReference>
<comment type="function">
    <molecule>Peptide pr</molecule>
    <text evidence="2">Prevents premature fusion activity of envelope proteins in trans-Golgi by binding to envelope protein E at pH6.0. After virion release in extracellular space, gets dissociated from E dimers.</text>
</comment>
<comment type="function">
    <molecule>Protein prM</molecule>
    <text evidence="2">Acts as a chaperone for envelope protein E during intracellular virion assembly by masking and inactivating envelope protein E fusion peptide. prM is the only viral peptide matured by host furin in the trans-Golgi network probably to avoid catastrophic activation of the viral fusion activity in acidic Golgi compartment prior to virion release. prM-E cleavage is inefficient, and many virions are only partially matured. These uncleaved prM would play a role in immune evasion.</text>
</comment>
<comment type="function">
    <molecule>Small envelope protein M</molecule>
    <text evidence="2">May play a role in virus budding. Exerts cytotoxic effects by activating a mitochondrial apoptotic pathway through M ectodomain. May display a viroporin activity.</text>
</comment>
<comment type="function">
    <molecule>Envelope protein E</molecule>
    <text evidence="2">Binds to host cell surface receptor and mediates fusion between viral and cellular membranes. Envelope protein is synthesized in the endoplasmic reticulum in the form of heterodimer with protein prM. They play a role in virion budding in the ER, and the newly formed immature particle is covered with 60 spikes composed of heterodimer between precursor prM and envelope protein E. The virion is transported to the Golgi apparatus where the low pH causes dissociation of PrM-E heterodimers and formation of E homodimers. prM-E cleavage is inefficient, and many virions are only partially matured. These uncleaved prM would play a role in immune evasion.</text>
</comment>
<comment type="function">
    <molecule>Non-structural protein 1</molecule>
    <text evidence="4">Involved in immune evasion, pathogenesis and viral replication. Once cleaved off the polyprotein, is targeted to three destinations: the viral replication cycle, the plasma membrane and the extracellular compartment. Essential for viral replication. Required for formation of the replication complex and recruitment of other non-structural proteins to the ER-derived membrane structures. Excreted as a hexameric lipoparticle that plays a role against host immune response. Antagonizing the complement function. Binds to the host macrophages and dendritic cells. Inhibits signal transduction originating from Toll-like receptor 3 (TLR3).</text>
</comment>
<comment type="function">
    <molecule>Non-structural protein 1</molecule>
    <text evidence="2">Disrupts the host endothelial glycocalyx layer of host pulmonary microvascular endothelial cells, inducing degradation of sialic acid and shedding of heparan sulfate proteoglycans. NS1 induces expression of sialidases, heparanase, and activates cathepsin L, which activates heparanase via enzymatic cleavage. These effects are probably linked to the endothelial hyperpermeability observed in severe dengue disease.</text>
</comment>
<comment type="subunit">
    <molecule>Protein prM</molecule>
    <text evidence="2">Forms heterodimers with envelope protein E in the endoplasmic reticulum and Golgi.</text>
</comment>
<comment type="subunit">
    <molecule>Envelope protein E</molecule>
    <text evidence="2">Homodimer; in the endoplasmic reticulum and Golgi. Interacts with protein prM. Interacts with non-structural protein 1.</text>
</comment>
<comment type="subcellular location">
    <molecule>Peptide pr</molecule>
    <subcellularLocation>
        <location evidence="2">Secreted</location>
    </subcellularLocation>
</comment>
<comment type="subcellular location">
    <molecule>Small envelope protein M</molecule>
    <subcellularLocation>
        <location evidence="2">Virion membrane</location>
        <topology evidence="5">Multi-pass membrane protein</topology>
    </subcellularLocation>
    <subcellularLocation>
        <location evidence="2">Host endoplasmic reticulum membrane</location>
        <topology evidence="5">Multi-pass membrane protein</topology>
    </subcellularLocation>
</comment>
<comment type="subcellular location">
    <molecule>Envelope protein E</molecule>
    <subcellularLocation>
        <location evidence="2">Virion membrane</location>
        <topology evidence="5">Multi-pass membrane protein</topology>
    </subcellularLocation>
    <subcellularLocation>
        <location evidence="2">Host endoplasmic reticulum membrane</location>
        <topology evidence="5">Multi-pass membrane protein</topology>
    </subcellularLocation>
</comment>
<comment type="subcellular location">
    <molecule>Non-structural protein 1</molecule>
    <subcellularLocation>
        <location evidence="2">Secreted</location>
    </subcellularLocation>
    <subcellularLocation>
        <location>Host endoplasmic reticulum membrane</location>
        <topology>Peripheral membrane protein</topology>
        <orientation evidence="2">Lumenal side</orientation>
    </subcellularLocation>
    <text evidence="4">Located in RE-derived vesicles hosting the replication complex.</text>
</comment>
<comment type="domain">
    <text evidence="2">The transmembrane domains of the small envelope protein M and envelope protein E contain an endoplasmic reticulum retention signal.</text>
</comment>
<comment type="PTM">
    <molecule>Protein prM</molecule>
    <text evidence="2">Cleaved in post-Golgi vesicles by a host furin, releasing the mature small envelope protein M, and peptide pr. This cleavage is incomplete as up to 30% of viral particles still carry uncleaved prM.</text>
</comment>
<comment type="PTM">
    <molecule>Envelope protein E</molecule>
    <text evidence="2">N-glycosylated.</text>
</comment>
<comment type="PTM">
    <molecule>Non-structural protein 1</molecule>
    <text evidence="2">N-glycosylated. The excreted form is glycosylated and this is required for efficient secretion of the protein from infected cells.</text>
</comment>
<comment type="PTM">
    <molecule>Genome polyprotein</molecule>
    <text evidence="2">Specific enzymatic cleavages in vivo yield mature proteins. Cleavages in the lumen of endoplasmic reticulum are performed by host signal peptidase, wereas cleavages in the cytoplasmic side are performed by serine protease NS3. Signal cleavage at the 2K-4B site requires a prior NS3 protease-mediated cleavage at the 4A-2K site.</text>
</comment>
<reference key="1">
    <citation type="journal article" date="1988" name="J. Gen. Virol.">
        <title>Partial nucleotide sequence and deduced amino acid sequence of the structural proteins of dengue virus type 2, New Guinea C and PUO-218 strains.</title>
        <authorList>
            <person name="Gruenberg A."/>
            <person name="Woo W.S."/>
            <person name="Biedrzycka A."/>
            <person name="Wright P.J."/>
        </authorList>
    </citation>
    <scope>NUCLEOTIDE SEQUENCE [GENOMIC RNA]</scope>
</reference>
<reference key="2">
    <citation type="journal article" date="2008" name="Proteins">
        <title>Solution structure and neutralizing antibody binding studies of domain III of the dengue-2 virus envelope protein.</title>
        <authorList>
            <person name="Huang K.C."/>
            <person name="Lee M.C."/>
            <person name="Wu C.W."/>
            <person name="Huang K.J."/>
            <person name="Lei H.Y."/>
            <person name="Cheng J.W."/>
        </authorList>
    </citation>
    <scope>STRUCTURE BY NMR OF 469-577</scope>
</reference>
<reference key="3">
    <citation type="journal article" date="2008" name="Nat. Struct. Mol. Biol.">
        <title>Binding of a neutralizing antibody to dengue virus alters the arrangement of surface glycoproteins.</title>
        <authorList>
            <person name="Lok S.M."/>
            <person name="Kostyuchenko V."/>
            <person name="Nybakken G.E."/>
            <person name="Holdaway H.A."/>
            <person name="Battisti A.J."/>
            <person name="Sukupolvi-Petty S."/>
            <person name="Sedlak D."/>
            <person name="Fremont D.H."/>
            <person name="Chipman P.R."/>
            <person name="Roehrig J.T."/>
            <person name="Diamond M.S."/>
            <person name="Kuhn R.J."/>
            <person name="Rossmann M.G."/>
        </authorList>
    </citation>
    <scope>STRUCTURE BY ELECTRON MICROSCOPY (24.0 ANGSTROMS) OF 15-95 AND 181-570</scope>
</reference>
<reference key="4">
    <citation type="journal article" date="2009" name="J. Virol.">
        <title>Association of the pr peptides with dengue virus at acidic pH blocks membrane fusion.</title>
        <authorList>
            <person name="Yu I.M."/>
            <person name="Holdaway H.A."/>
            <person name="Chipman P.R."/>
            <person name="Kuhn R.J."/>
            <person name="Rossmann M.G."/>
            <person name="Chen J."/>
        </authorList>
    </citation>
    <scope>STRUCTURE BY ELECTRON MICROSCOPY (24.0 ANGSTROMS) OF 15-95 AND 181-575</scope>
</reference>
<organismHost>
    <name type="scientific">Aedimorphus</name>
    <dbReference type="NCBI Taxonomy" id="53540"/>
</organismHost>
<organismHost>
    <name type="scientific">Diceromyia</name>
    <dbReference type="NCBI Taxonomy" id="53539"/>
</organismHost>
<organismHost>
    <name type="scientific">Erythrocebus patas</name>
    <name type="common">Red guenon</name>
    <name type="synonym">Cercopithecus patas</name>
    <dbReference type="NCBI Taxonomy" id="9538"/>
</organismHost>
<organismHost>
    <name type="scientific">Homo sapiens</name>
    <name type="common">Human</name>
    <dbReference type="NCBI Taxonomy" id="9606"/>
</organismHost>
<organismHost>
    <name type="scientific">Stegomyia</name>
    <dbReference type="NCBI Taxonomy" id="53541"/>
</organismHost>
<proteinExistence type="evidence at protein level"/>
<accession>P18356</accession>
<feature type="chain" id="PRO_0000405220" description="Genome polyprotein">
    <location>
        <begin position="1" status="less than"/>
        <end position="679" status="greater than"/>
    </location>
</feature>
<feature type="propeptide" id="PRO_0000037985" description="ER anchor for the capsid protein C, removed in mature form by serine protease NS3" evidence="3">
    <location>
        <begin position="1"/>
        <end position="14"/>
    </location>
</feature>
<feature type="chain" id="PRO_0000308291" description="Protein prM" evidence="3">
    <location>
        <begin position="15"/>
        <end position="180"/>
    </location>
</feature>
<feature type="chain" id="PRO_0000308292" description="Peptide pr" evidence="3">
    <location>
        <begin position="15"/>
        <end position="105"/>
    </location>
</feature>
<feature type="chain" id="PRO_0000037986" description="Small envelope protein M" evidence="3">
    <location>
        <begin position="106"/>
        <end position="180"/>
    </location>
</feature>
<feature type="chain" id="PRO_0000037987" description="Envelope protein E" evidence="3">
    <location>
        <begin position="181"/>
        <end position="675"/>
    </location>
</feature>
<feature type="chain" id="PRO_0000037988" description="Non-structural protein 1" evidence="3">
    <location>
        <begin position="676"/>
        <end position="679" status="greater than"/>
    </location>
</feature>
<feature type="transmembrane region" description="Helical" evidence="5">
    <location>
        <begin position="2"/>
        <end position="22"/>
    </location>
</feature>
<feature type="topological domain" description="Extracellular" evidence="5">
    <location>
        <begin position="23"/>
        <end position="138"/>
    </location>
</feature>
<feature type="transmembrane region" description="Helical" evidence="5">
    <location>
        <begin position="139"/>
        <end position="159"/>
    </location>
</feature>
<feature type="topological domain" description="Cytoplasmic" evidence="5">
    <location>
        <begin position="160"/>
        <end position="165"/>
    </location>
</feature>
<feature type="transmembrane region" description="Helical" evidence="5">
    <location>
        <begin position="166"/>
        <end position="180"/>
    </location>
</feature>
<feature type="topological domain" description="Extracellular" evidence="5">
    <location>
        <begin position="181"/>
        <end position="625"/>
    </location>
</feature>
<feature type="transmembrane region" description="Helical" evidence="5">
    <location>
        <begin position="626"/>
        <end position="646"/>
    </location>
</feature>
<feature type="topological domain" description="Cytoplasmic" evidence="5">
    <location>
        <begin position="647"/>
        <end position="652"/>
    </location>
</feature>
<feature type="transmembrane region" description="Helical" evidence="5">
    <location>
        <begin position="653"/>
        <end position="673"/>
    </location>
</feature>
<feature type="topological domain" description="Extracellular" evidence="5">
    <location>
        <begin position="674"/>
        <end position="679" status="greater than"/>
    </location>
</feature>
<feature type="region of interest" description="Fusion peptide" evidence="1">
    <location>
        <begin position="278"/>
        <end position="291"/>
    </location>
</feature>
<feature type="site" description="Cleavage; by host signal peptidase" evidence="3">
    <location>
        <begin position="14"/>
        <end position="15"/>
    </location>
</feature>
<feature type="site" description="Cleavage; by host furin" evidence="3 5">
    <location>
        <begin position="105"/>
        <end position="106"/>
    </location>
</feature>
<feature type="site" description="Cleavage; by host signal peptidase" evidence="3">
    <location>
        <begin position="180"/>
        <end position="181"/>
    </location>
</feature>
<feature type="site" description="Cleavage; by host signal peptidase" evidence="3">
    <location>
        <begin position="675"/>
        <end position="676"/>
    </location>
</feature>
<feature type="glycosylation site" description="N-linked (GlcNAc...) asparagine; by host" evidence="5">
    <location>
        <position position="83"/>
    </location>
</feature>
<feature type="glycosylation site" description="N-linked (GlcNAc...) asparagine; by host" evidence="5">
    <location>
        <position position="247"/>
    </location>
</feature>
<feature type="glycosylation site" description="N-linked (GlcNAc...) asparagine; by host" evidence="5">
    <location>
        <position position="333"/>
    </location>
</feature>
<feature type="disulfide bond" evidence="2">
    <location>
        <begin position="183"/>
        <end position="210"/>
    </location>
</feature>
<feature type="disulfide bond" evidence="2">
    <location>
        <begin position="240"/>
        <end position="301"/>
    </location>
</feature>
<feature type="disulfide bond" evidence="2">
    <location>
        <begin position="254"/>
        <end position="285"/>
    </location>
</feature>
<feature type="disulfide bond" evidence="2">
    <location>
        <begin position="272"/>
        <end position="296"/>
    </location>
</feature>
<feature type="disulfide bond" evidence="2">
    <location>
        <begin position="365"/>
        <end position="465"/>
    </location>
</feature>
<feature type="disulfide bond" evidence="2">
    <location>
        <begin position="482"/>
        <end position="513"/>
    </location>
</feature>
<feature type="non-terminal residue">
    <location>
        <position position="1"/>
    </location>
</feature>
<feature type="non-terminal residue">
    <location>
        <position position="679"/>
    </location>
</feature>
<feature type="turn" evidence="7">
    <location>
        <begin position="182"/>
        <end position="185"/>
    </location>
</feature>
<feature type="strand" evidence="7">
    <location>
        <begin position="187"/>
        <end position="193"/>
    </location>
</feature>
<feature type="strand" evidence="7">
    <location>
        <begin position="199"/>
        <end position="207"/>
    </location>
</feature>
<feature type="strand" evidence="7">
    <location>
        <begin position="210"/>
        <end position="214"/>
    </location>
</feature>
<feature type="strand" evidence="7">
    <location>
        <begin position="221"/>
        <end position="230"/>
    </location>
</feature>
<feature type="strand" evidence="7">
    <location>
        <begin position="234"/>
        <end position="252"/>
    </location>
</feature>
<feature type="helix" evidence="7">
    <location>
        <begin position="263"/>
        <end position="266"/>
    </location>
</feature>
<feature type="strand" evidence="7">
    <location>
        <begin position="270"/>
        <end position="280"/>
    </location>
</feature>
<feature type="helix" evidence="7">
    <location>
        <begin position="281"/>
        <end position="283"/>
    </location>
</feature>
<feature type="strand" evidence="7">
    <location>
        <begin position="289"/>
        <end position="309"/>
    </location>
</feature>
<feature type="helix" evidence="7">
    <location>
        <begin position="312"/>
        <end position="314"/>
    </location>
</feature>
<feature type="strand" evidence="7">
    <location>
        <begin position="315"/>
        <end position="323"/>
    </location>
</feature>
<feature type="strand" evidence="7">
    <location>
        <begin position="335"/>
        <end position="337"/>
    </location>
</feature>
<feature type="strand" evidence="7">
    <location>
        <begin position="339"/>
        <end position="344"/>
    </location>
</feature>
<feature type="strand" evidence="7">
    <location>
        <begin position="349"/>
        <end position="355"/>
    </location>
</feature>
<feature type="turn" evidence="7">
    <location>
        <begin position="356"/>
        <end position="358"/>
    </location>
</feature>
<feature type="strand" evidence="7">
    <location>
        <begin position="359"/>
        <end position="366"/>
    </location>
</feature>
<feature type="helix" evidence="7">
    <location>
        <begin position="367"/>
        <end position="369"/>
    </location>
</feature>
<feature type="strand" evidence="7">
    <location>
        <begin position="375"/>
        <end position="380"/>
    </location>
</feature>
<feature type="strand" evidence="7">
    <location>
        <begin position="385"/>
        <end position="389"/>
    </location>
</feature>
<feature type="helix" evidence="7">
    <location>
        <begin position="390"/>
        <end position="394"/>
    </location>
</feature>
<feature type="strand" evidence="7">
    <location>
        <begin position="400"/>
        <end position="402"/>
    </location>
</feature>
<feature type="helix" evidence="7">
    <location>
        <begin position="414"/>
        <end position="417"/>
    </location>
</feature>
<feature type="strand" evidence="7">
    <location>
        <begin position="418"/>
        <end position="421"/>
    </location>
</feature>
<feature type="strand" evidence="7">
    <location>
        <begin position="429"/>
        <end position="432"/>
    </location>
</feature>
<feature type="helix" evidence="7">
    <location>
        <begin position="437"/>
        <end position="443"/>
    </location>
</feature>
<feature type="turn" evidence="7">
    <location>
        <begin position="444"/>
        <end position="446"/>
    </location>
</feature>
<feature type="strand" evidence="7">
    <location>
        <begin position="447"/>
        <end position="451"/>
    </location>
</feature>
<feature type="strand" evidence="7">
    <location>
        <begin position="455"/>
        <end position="458"/>
    </location>
</feature>
<feature type="strand" evidence="7">
    <location>
        <begin position="461"/>
        <end position="468"/>
    </location>
</feature>
<feature type="strand" evidence="7">
    <location>
        <begin position="486"/>
        <end position="494"/>
    </location>
</feature>
<feature type="strand" evidence="6">
    <location>
        <begin position="496"/>
        <end position="498"/>
    </location>
</feature>
<feature type="strand" evidence="7">
    <location>
        <begin position="500"/>
        <end position="506"/>
    </location>
</feature>
<feature type="strand" evidence="7">
    <location>
        <begin position="508"/>
        <end position="510"/>
    </location>
</feature>
<feature type="strand" evidence="7">
    <location>
        <begin position="512"/>
        <end position="514"/>
    </location>
</feature>
<feature type="strand" evidence="7">
    <location>
        <begin position="517"/>
        <end position="520"/>
    </location>
</feature>
<feature type="helix" evidence="6">
    <location>
        <begin position="522"/>
        <end position="524"/>
    </location>
</feature>
<feature type="strand" evidence="7">
    <location>
        <begin position="526"/>
        <end position="533"/>
    </location>
</feature>
<feature type="strand" evidence="7">
    <location>
        <begin position="537"/>
        <end position="540"/>
    </location>
</feature>
<feature type="strand" evidence="7">
    <location>
        <begin position="545"/>
        <end position="550"/>
    </location>
</feature>
<feature type="strand" evidence="7">
    <location>
        <begin position="553"/>
        <end position="561"/>
    </location>
</feature>
<feature type="strand" evidence="7">
    <location>
        <begin position="563"/>
        <end position="565"/>
    </location>
</feature>
<feature type="strand" evidence="7">
    <location>
        <begin position="567"/>
        <end position="573"/>
    </location>
</feature>
<feature type="helix" evidence="7">
    <location>
        <begin position="577"/>
        <end position="595"/>
    </location>
</feature>
<feature type="helix" evidence="7">
    <location>
        <begin position="596"/>
        <end position="601"/>
    </location>
</feature>
<feature type="helix" evidence="7">
    <location>
        <begin position="608"/>
        <end position="628"/>
    </location>
</feature>
<feature type="helix" evidence="7">
    <location>
        <begin position="633"/>
        <end position="648"/>
    </location>
</feature>
<feature type="helix" evidence="7">
    <location>
        <begin position="654"/>
        <end position="672"/>
    </location>
</feature>
<evidence type="ECO:0000250" key="1">
    <source>
        <dbReference type="UniProtKB" id="P14336"/>
    </source>
</evidence>
<evidence type="ECO:0000250" key="2">
    <source>
        <dbReference type="UniProtKB" id="P17763"/>
    </source>
</evidence>
<evidence type="ECO:0000250" key="3">
    <source>
        <dbReference type="UniProtKB" id="P29990"/>
    </source>
</evidence>
<evidence type="ECO:0000250" key="4">
    <source>
        <dbReference type="UniProtKB" id="Q9Q6P4"/>
    </source>
</evidence>
<evidence type="ECO:0000255" key="5"/>
<evidence type="ECO:0007829" key="6">
    <source>
        <dbReference type="PDB" id="2JSF"/>
    </source>
</evidence>
<evidence type="ECO:0007829" key="7">
    <source>
        <dbReference type="PDB" id="7KV8"/>
    </source>
</evidence>